<reference key="1">
    <citation type="journal article" date="2005" name="Nucleic Acids Res.">
        <title>Genome dynamics and diversity of Shigella species, the etiologic agents of bacillary dysentery.</title>
        <authorList>
            <person name="Yang F."/>
            <person name="Yang J."/>
            <person name="Zhang X."/>
            <person name="Chen L."/>
            <person name="Jiang Y."/>
            <person name="Yan Y."/>
            <person name="Tang X."/>
            <person name="Wang J."/>
            <person name="Xiong Z."/>
            <person name="Dong J."/>
            <person name="Xue Y."/>
            <person name="Zhu Y."/>
            <person name="Xu X."/>
            <person name="Sun L."/>
            <person name="Chen S."/>
            <person name="Nie H."/>
            <person name="Peng J."/>
            <person name="Xu J."/>
            <person name="Wang Y."/>
            <person name="Yuan Z."/>
            <person name="Wen Y."/>
            <person name="Yao Z."/>
            <person name="Shen Y."/>
            <person name="Qiang B."/>
            <person name="Hou Y."/>
            <person name="Yu J."/>
            <person name="Jin Q."/>
        </authorList>
    </citation>
    <scope>NUCLEOTIDE SEQUENCE [LARGE SCALE GENOMIC DNA]</scope>
    <source>
        <strain>Sb227</strain>
    </source>
</reference>
<dbReference type="EC" id="1.8.1.2" evidence="1"/>
<dbReference type="EMBL" id="CP000036">
    <property type="protein sequence ID" value="ABB67183.1"/>
    <property type="molecule type" value="Genomic_DNA"/>
</dbReference>
<dbReference type="RefSeq" id="WP_001290680.1">
    <property type="nucleotide sequence ID" value="NC_007613.1"/>
</dbReference>
<dbReference type="SMR" id="Q31XM5"/>
<dbReference type="KEGG" id="sbo:SBO_2646"/>
<dbReference type="HOGENOM" id="CLU_001975_3_2_6"/>
<dbReference type="UniPathway" id="UPA00140">
    <property type="reaction ID" value="UER00207"/>
</dbReference>
<dbReference type="Proteomes" id="UP000007067">
    <property type="component" value="Chromosome"/>
</dbReference>
<dbReference type="GO" id="GO:0009337">
    <property type="term" value="C:sulfite reductase complex (NADPH)"/>
    <property type="evidence" value="ECO:0007669"/>
    <property type="project" value="InterPro"/>
</dbReference>
<dbReference type="GO" id="GO:0051539">
    <property type="term" value="F:4 iron, 4 sulfur cluster binding"/>
    <property type="evidence" value="ECO:0007669"/>
    <property type="project" value="UniProtKB-KW"/>
</dbReference>
<dbReference type="GO" id="GO:0020037">
    <property type="term" value="F:heme binding"/>
    <property type="evidence" value="ECO:0007669"/>
    <property type="project" value="InterPro"/>
</dbReference>
<dbReference type="GO" id="GO:0046872">
    <property type="term" value="F:metal ion binding"/>
    <property type="evidence" value="ECO:0007669"/>
    <property type="project" value="UniProtKB-KW"/>
</dbReference>
<dbReference type="GO" id="GO:0050661">
    <property type="term" value="F:NADP binding"/>
    <property type="evidence" value="ECO:0007669"/>
    <property type="project" value="InterPro"/>
</dbReference>
<dbReference type="GO" id="GO:0050311">
    <property type="term" value="F:sulfite reductase (ferredoxin) activity"/>
    <property type="evidence" value="ECO:0007669"/>
    <property type="project" value="TreeGrafter"/>
</dbReference>
<dbReference type="GO" id="GO:0004783">
    <property type="term" value="F:sulfite reductase (NADPH) activity"/>
    <property type="evidence" value="ECO:0007669"/>
    <property type="project" value="UniProtKB-UniRule"/>
</dbReference>
<dbReference type="GO" id="GO:0019344">
    <property type="term" value="P:cysteine biosynthetic process"/>
    <property type="evidence" value="ECO:0007669"/>
    <property type="project" value="UniProtKB-KW"/>
</dbReference>
<dbReference type="GO" id="GO:0070814">
    <property type="term" value="P:hydrogen sulfide biosynthetic process"/>
    <property type="evidence" value="ECO:0007669"/>
    <property type="project" value="UniProtKB-UniRule"/>
</dbReference>
<dbReference type="GO" id="GO:0000103">
    <property type="term" value="P:sulfate assimilation"/>
    <property type="evidence" value="ECO:0007669"/>
    <property type="project" value="UniProtKB-UniRule"/>
</dbReference>
<dbReference type="FunFam" id="3.30.413.10:FF:000003">
    <property type="entry name" value="Sulfite reductase [NADPH] hemoprotein beta-component"/>
    <property type="match status" value="1"/>
</dbReference>
<dbReference type="FunFam" id="3.30.413.10:FF:000004">
    <property type="entry name" value="Sulfite reductase [NADPH] hemoprotein beta-component"/>
    <property type="match status" value="1"/>
</dbReference>
<dbReference type="Gene3D" id="3.30.413.10">
    <property type="entry name" value="Sulfite Reductase Hemoprotein, domain 1"/>
    <property type="match status" value="2"/>
</dbReference>
<dbReference type="HAMAP" id="MF_01540">
    <property type="entry name" value="CysI"/>
    <property type="match status" value="1"/>
</dbReference>
<dbReference type="InterPro" id="IPR011786">
    <property type="entry name" value="CysI"/>
</dbReference>
<dbReference type="InterPro" id="IPR005117">
    <property type="entry name" value="NiRdtase/SiRdtase_haem-b_fer"/>
</dbReference>
<dbReference type="InterPro" id="IPR036136">
    <property type="entry name" value="Nit/Sulf_reduc_fer-like_dom_sf"/>
</dbReference>
<dbReference type="InterPro" id="IPR006067">
    <property type="entry name" value="NO2/SO3_Rdtase_4Fe4S_dom"/>
</dbReference>
<dbReference type="InterPro" id="IPR045169">
    <property type="entry name" value="NO2/SO3_Rdtase_4Fe4S_prot"/>
</dbReference>
<dbReference type="InterPro" id="IPR045854">
    <property type="entry name" value="NO2/SO3_Rdtase_4Fe4S_sf"/>
</dbReference>
<dbReference type="InterPro" id="IPR006066">
    <property type="entry name" value="NO2/SO3_Rdtase_FeS/sirohaem_BS"/>
</dbReference>
<dbReference type="NCBIfam" id="TIGR02041">
    <property type="entry name" value="CysI"/>
    <property type="match status" value="1"/>
</dbReference>
<dbReference type="NCBIfam" id="NF010029">
    <property type="entry name" value="PRK13504.1"/>
    <property type="match status" value="1"/>
</dbReference>
<dbReference type="PANTHER" id="PTHR11493:SF47">
    <property type="entry name" value="SULFITE REDUCTASE [NADPH] SUBUNIT BETA"/>
    <property type="match status" value="1"/>
</dbReference>
<dbReference type="PANTHER" id="PTHR11493">
    <property type="entry name" value="SULFITE REDUCTASE [NADPH] SUBUNIT BETA-RELATED"/>
    <property type="match status" value="1"/>
</dbReference>
<dbReference type="Pfam" id="PF01077">
    <property type="entry name" value="NIR_SIR"/>
    <property type="match status" value="1"/>
</dbReference>
<dbReference type="Pfam" id="PF03460">
    <property type="entry name" value="NIR_SIR_ferr"/>
    <property type="match status" value="2"/>
</dbReference>
<dbReference type="PRINTS" id="PR00397">
    <property type="entry name" value="SIROHAEM"/>
</dbReference>
<dbReference type="SUPFAM" id="SSF56014">
    <property type="entry name" value="Nitrite and sulphite reductase 4Fe-4S domain-like"/>
    <property type="match status" value="2"/>
</dbReference>
<dbReference type="SUPFAM" id="SSF55124">
    <property type="entry name" value="Nitrite/Sulfite reductase N-terminal domain-like"/>
    <property type="match status" value="2"/>
</dbReference>
<dbReference type="PROSITE" id="PS00365">
    <property type="entry name" value="NIR_SIR"/>
    <property type="match status" value="1"/>
</dbReference>
<sequence>MSEKHPGPLVVEGKLTDAERMKLESNYLRGTIAEDLNDGLTGGFKGDNFLLIRFHGMYQQDDRDIRAERAEQKLEPHHAMLLRCRLPGGVITTKQWQAIDKFAGENTIYGSIRLTNRQTFQFHGILKKNVKPVHQMLHSVGLDALATANDMNRNVLCTSNPYESQLHAEAYEWAKKISEHLLPRTRAYAEIWLDQEKVATTDEEPILGQTYLPRKFKTTVVIPPQNDIDLHANDMNFVAIAENGKLVGFNLLVGGGLSIEHGNKKTYARTASEFGYLPLEHTLAVAEAVVTTQRDWGNRTDRKNAKTKYTLERVGVETFKAEVERRAGIKFEPIRPYEFTGRGDRIGWVKGIDDNWHLTLFIENGRILDYPGRPLKTGLLEIAKIHKGDFRITANQNLIIAGVPESEKAKIEKIAKESGLMNAVTPQRENSMACVSFPTCPLAMAEAERFLPSFIDNIDNLMAKHGVSDEHIVMRVTGCPNGCGRAMLAEVGLVGKAPGRYNLHLGGNRIGTRIPRMYKENITEPEILASLDELIGRWAKEREAGEGFGDFTVRAGIIRPVLDPARDLWD</sequence>
<accession>Q31XM5</accession>
<keyword id="KW-0004">4Fe-4S</keyword>
<keyword id="KW-0028">Amino-acid biosynthesis</keyword>
<keyword id="KW-0198">Cysteine biosynthesis</keyword>
<keyword id="KW-0349">Heme</keyword>
<keyword id="KW-0408">Iron</keyword>
<keyword id="KW-0411">Iron-sulfur</keyword>
<keyword id="KW-0479">Metal-binding</keyword>
<keyword id="KW-0521">NADP</keyword>
<keyword id="KW-0560">Oxidoreductase</keyword>
<organism>
    <name type="scientific">Shigella boydii serotype 4 (strain Sb227)</name>
    <dbReference type="NCBI Taxonomy" id="300268"/>
    <lineage>
        <taxon>Bacteria</taxon>
        <taxon>Pseudomonadati</taxon>
        <taxon>Pseudomonadota</taxon>
        <taxon>Gammaproteobacteria</taxon>
        <taxon>Enterobacterales</taxon>
        <taxon>Enterobacteriaceae</taxon>
        <taxon>Shigella</taxon>
    </lineage>
</organism>
<proteinExistence type="inferred from homology"/>
<comment type="function">
    <text evidence="1">Component of the sulfite reductase complex that catalyzes the 6-electron reduction of sulfite to sulfide. This is one of several activities required for the biosynthesis of L-cysteine from sulfate.</text>
</comment>
<comment type="catalytic activity">
    <reaction evidence="1">
        <text>hydrogen sulfide + 3 NADP(+) + 3 H2O = sulfite + 3 NADPH + 4 H(+)</text>
        <dbReference type="Rhea" id="RHEA:13801"/>
        <dbReference type="ChEBI" id="CHEBI:15377"/>
        <dbReference type="ChEBI" id="CHEBI:15378"/>
        <dbReference type="ChEBI" id="CHEBI:17359"/>
        <dbReference type="ChEBI" id="CHEBI:29919"/>
        <dbReference type="ChEBI" id="CHEBI:57783"/>
        <dbReference type="ChEBI" id="CHEBI:58349"/>
        <dbReference type="EC" id="1.8.1.2"/>
    </reaction>
</comment>
<comment type="cofactor">
    <cofactor evidence="1">
        <name>siroheme</name>
        <dbReference type="ChEBI" id="CHEBI:60052"/>
    </cofactor>
    <text evidence="1">Binds 1 siroheme per subunit.</text>
</comment>
<comment type="cofactor">
    <cofactor evidence="1">
        <name>[4Fe-4S] cluster</name>
        <dbReference type="ChEBI" id="CHEBI:49883"/>
    </cofactor>
    <text evidence="1">Binds 1 [4Fe-4S] cluster per subunit.</text>
</comment>
<comment type="pathway">
    <text evidence="1">Sulfur metabolism; hydrogen sulfide biosynthesis; hydrogen sulfide from sulfite (NADPH route): step 1/1.</text>
</comment>
<comment type="subunit">
    <text evidence="1">Alpha(8)-beta(8). The alpha component is a flavoprotein, the beta component is a hemoprotein.</text>
</comment>
<comment type="similarity">
    <text evidence="1">Belongs to the nitrite and sulfite reductase 4Fe-4S domain family.</text>
</comment>
<gene>
    <name evidence="1" type="primary">cysI</name>
    <name type="ordered locus">SBO_2646</name>
</gene>
<protein>
    <recommendedName>
        <fullName evidence="1">Sulfite reductase [NADPH] hemoprotein beta-component</fullName>
        <shortName evidence="1">SiR-HP</shortName>
        <shortName evidence="1">SiRHP</shortName>
        <ecNumber evidence="1">1.8.1.2</ecNumber>
    </recommendedName>
</protein>
<evidence type="ECO:0000255" key="1">
    <source>
        <dbReference type="HAMAP-Rule" id="MF_01540"/>
    </source>
</evidence>
<feature type="chain" id="PRO_1000068775" description="Sulfite reductase [NADPH] hemoprotein beta-component">
    <location>
        <begin position="1"/>
        <end position="570"/>
    </location>
</feature>
<feature type="binding site" evidence="1">
    <location>
        <position position="434"/>
    </location>
    <ligand>
        <name>[4Fe-4S] cluster</name>
        <dbReference type="ChEBI" id="CHEBI:49883"/>
    </ligand>
</feature>
<feature type="binding site" evidence="1">
    <location>
        <position position="440"/>
    </location>
    <ligand>
        <name>[4Fe-4S] cluster</name>
        <dbReference type="ChEBI" id="CHEBI:49883"/>
    </ligand>
</feature>
<feature type="binding site" evidence="1">
    <location>
        <position position="479"/>
    </location>
    <ligand>
        <name>[4Fe-4S] cluster</name>
        <dbReference type="ChEBI" id="CHEBI:49883"/>
    </ligand>
</feature>
<feature type="binding site" evidence="1">
    <location>
        <position position="483"/>
    </location>
    <ligand>
        <name>[4Fe-4S] cluster</name>
        <dbReference type="ChEBI" id="CHEBI:49883"/>
    </ligand>
</feature>
<feature type="binding site" description="axial binding residue" evidence="1">
    <location>
        <position position="483"/>
    </location>
    <ligand>
        <name>siroheme</name>
        <dbReference type="ChEBI" id="CHEBI:60052"/>
    </ligand>
    <ligandPart>
        <name>Fe</name>
        <dbReference type="ChEBI" id="CHEBI:18248"/>
    </ligandPart>
</feature>
<name>CYSI_SHIBS</name>